<name>MYO16_ARATH</name>
<sequence>MAENIMVDSHVWVEDPERAWIDGVVLNIKGEEAEIKTNDGRDVIANLSRLYPKDTEAPSEGVEDMTRLSYLHEPAVLDNLATRYELNEIYTYTGNILIAVNPFQGLPHLYDAEVMEKYKEAYFKELNPHVFAIGGIAYREMINEGRNKCILVSGESGSGKTETTKMLMRYLAYFGGHTAVEGRTVENQVLESNPVLEAFGNAKTVKNNNSSRFGKFVEIQFDDVGRISGAAIRTYLLERSRVCQVSDPERNYHCFYLLCAAPPEDVERFKLGDPKSFRYLNQSSCYKLDGVNDAEEYLATRRAMDVVGISEKEQDAIFRVVASILHLGNIEFSKGEDADSSSVKDEQSMFHLQMTSELLMCDPHSLEDALCKRMMVTPEEVIKRSLDPLGAAVSRDGLAKTIYSRLFDWLVNKINISIGQDSHSRRLIGVLDIYGFESFKTNSFEQFCINYTNEKLQQHFNQHVFKMEQGEYQKEEIDWSYVEFVDNKDVVDLIEKKPGGIIALLDEACMLPKSTPETFSEKLYHTFKDHKRFMKPKLTRSDFTLVHYAGDVQYQSDQFLDKNKDYVVAEHQDLLNASKCSFVSGLFPPLPKESSKSKFSSIGARFKLQLQQLMETLNSTEPHYIRCVKPNNLLQPTVFDNANVLHQLRSGGVLEAIRVKCAGYPTNRTFIEFLNRFLILAPEILKGEYEAEVACKWILEKKGLTGYQIGKSKVFLRAGQMAELDAHRTRVLGESARMIQGQVRTRLTRERFVLMRRASVNIQANWRGNIARKISKEMRREEAAIKIQKNLRRQIAKKDYGKTKSSALTLQSGVRTMAARHEFRYKLTTRAATVIQAYWRGYSAISDYKKLKRVSLLCKSNLRGRIARKQLGQSKQADRKEETEKERKVELSNRAEEAVDMSFVLHSEQSDDAESGHGRKAKLSIESEDGLDKSSVLHSEQSDDEELGHERKTKLSIESEDGHSDQSDDEEIEHERKTKHCIQAEDGIEKSYVMHSDQSDDEEIGHKRKTKHSIQAEDGIEKSFVVHSDQSDDEEIGHERKTKHAIQVEDGIQKSFVTCSEKPYNTFSVVSQITSPIRDTEIESLTAEVEMLKALLQVEKQRADISERKCAEARELGERRRKRLEETERRVYQLQDSLNRLLYSMSDQFSQLKSILRSPSMSASTMASAPVVRDDLADSSENSEASSSDSDFTFPAPSPSSDNFSTFNPNQLQVIVQDLSTTEAKGTESYDSDKEGGFEDYF</sequence>
<evidence type="ECO:0000250" key="1"/>
<evidence type="ECO:0000255" key="2"/>
<evidence type="ECO:0000255" key="3">
    <source>
        <dbReference type="PROSITE-ProRule" id="PRU00116"/>
    </source>
</evidence>
<evidence type="ECO:0000255" key="4">
    <source>
        <dbReference type="PROSITE-ProRule" id="PRU00782"/>
    </source>
</evidence>
<evidence type="ECO:0000255" key="5">
    <source>
        <dbReference type="PROSITE-ProRule" id="PRU01190"/>
    </source>
</evidence>
<evidence type="ECO:0000256" key="6">
    <source>
        <dbReference type="SAM" id="MobiDB-lite"/>
    </source>
</evidence>
<evidence type="ECO:0000269" key="7">
    <source>
    </source>
</evidence>
<evidence type="ECO:0000269" key="8">
    <source>
    </source>
</evidence>
<evidence type="ECO:0000305" key="9"/>
<comment type="function">
    <text evidence="1">Myosin heavy chain that is required for the cell cycle-regulated transport of various organelles and proteins for their segregation. Functions by binding with its tail domain to receptor proteins on organelles and exerting force with its N-terminal motor domain against actin filaments, thereby transporting its cargo along polarized actin cables (By similarity).</text>
</comment>
<comment type="subunit">
    <text evidence="1">Homodimer.</text>
</comment>
<comment type="subcellular location">
    <subcellularLocation>
        <location evidence="7">Cytoplasm</location>
    </subcellularLocation>
    <text>Colocalizes with cytoplasmic vesicles and/or organelles.</text>
</comment>
<comment type="tissue specificity">
    <text evidence="8">Expressed in flowers and leaves.</text>
</comment>
<comment type="domain">
    <text evidence="1">IQ domain mediates interaction with calmodulin.</text>
</comment>
<comment type="domain">
    <text evidence="1">The tail domain is a globular cargo-binding domain.</text>
</comment>
<comment type="similarity">
    <text evidence="9">Belongs to the TRAFAC class myosin-kinesin ATPase superfamily. Myosin family. Plant myosin class XI subfamily.</text>
</comment>
<comment type="sequence caution" evidence="9">
    <conflict type="frameshift">
        <sequence resource="EMBL-CDS" id="CAA84067"/>
    </conflict>
</comment>
<organism>
    <name type="scientific">Arabidopsis thaliana</name>
    <name type="common">Mouse-ear cress</name>
    <dbReference type="NCBI Taxonomy" id="3702"/>
    <lineage>
        <taxon>Eukaryota</taxon>
        <taxon>Viridiplantae</taxon>
        <taxon>Streptophyta</taxon>
        <taxon>Embryophyta</taxon>
        <taxon>Tracheophyta</taxon>
        <taxon>Spermatophyta</taxon>
        <taxon>Magnoliopsida</taxon>
        <taxon>eudicotyledons</taxon>
        <taxon>Gunneridae</taxon>
        <taxon>Pentapetalae</taxon>
        <taxon>rosids</taxon>
        <taxon>malvids</taxon>
        <taxon>Brassicales</taxon>
        <taxon>Brassicaceae</taxon>
        <taxon>Camelineae</taxon>
        <taxon>Arabidopsis</taxon>
    </lineage>
</organism>
<keyword id="KW-0009">Actin-binding</keyword>
<keyword id="KW-0067">ATP-binding</keyword>
<keyword id="KW-0112">Calmodulin-binding</keyword>
<keyword id="KW-0175">Coiled coil</keyword>
<keyword id="KW-0963">Cytoplasm</keyword>
<keyword id="KW-0378">Hydrolase</keyword>
<keyword id="KW-0505">Motor protein</keyword>
<keyword id="KW-0518">Myosin</keyword>
<keyword id="KW-0547">Nucleotide-binding</keyword>
<keyword id="KW-1185">Reference proteome</keyword>
<keyword id="KW-0677">Repeat</keyword>
<proteinExistence type="evidence at transcript level"/>
<dbReference type="EMBL" id="AL137081">
    <property type="protein sequence ID" value="CAB68154.1"/>
    <property type="molecule type" value="Genomic_DNA"/>
</dbReference>
<dbReference type="EMBL" id="CP002686">
    <property type="protein sequence ID" value="AEE79749.1"/>
    <property type="molecule type" value="Genomic_DNA"/>
</dbReference>
<dbReference type="EMBL" id="CP002686">
    <property type="protein sequence ID" value="ANM65823.1"/>
    <property type="molecule type" value="Genomic_DNA"/>
</dbReference>
<dbReference type="EMBL" id="Z34294">
    <property type="protein sequence ID" value="CAA84067.1"/>
    <property type="status" value="ALT_FRAME"/>
    <property type="molecule type" value="mRNA"/>
</dbReference>
<dbReference type="PIR" id="S47105">
    <property type="entry name" value="S47105"/>
</dbReference>
<dbReference type="PIR" id="T45976">
    <property type="entry name" value="T45976"/>
</dbReference>
<dbReference type="RefSeq" id="NP_001319790.1">
    <property type="nucleotide sequence ID" value="NM_001339909.1"/>
</dbReference>
<dbReference type="RefSeq" id="NP_191375.1">
    <property type="nucleotide sequence ID" value="NM_115678.2"/>
</dbReference>
<dbReference type="SMR" id="Q9M2K0"/>
<dbReference type="FunCoup" id="Q9M2K0">
    <property type="interactions" value="724"/>
</dbReference>
<dbReference type="STRING" id="3702.Q9M2K0"/>
<dbReference type="iPTMnet" id="Q9M2K0"/>
<dbReference type="MetOSite" id="Q9M2K0"/>
<dbReference type="PaxDb" id="3702-AT3G58160.1"/>
<dbReference type="ProteomicsDB" id="251218"/>
<dbReference type="EnsemblPlants" id="AT3G58160.1">
    <property type="protein sequence ID" value="AT3G58160.1"/>
    <property type="gene ID" value="AT3G58160"/>
</dbReference>
<dbReference type="EnsemblPlants" id="AT3G58160.5">
    <property type="protein sequence ID" value="AT3G58160.5"/>
    <property type="gene ID" value="AT3G58160"/>
</dbReference>
<dbReference type="GeneID" id="824985"/>
<dbReference type="Gramene" id="AT3G58160.1">
    <property type="protein sequence ID" value="AT3G58160.1"/>
    <property type="gene ID" value="AT3G58160"/>
</dbReference>
<dbReference type="Gramene" id="AT3G58160.5">
    <property type="protein sequence ID" value="AT3G58160.5"/>
    <property type="gene ID" value="AT3G58160"/>
</dbReference>
<dbReference type="KEGG" id="ath:AT3G58160"/>
<dbReference type="Araport" id="AT3G58160"/>
<dbReference type="TAIR" id="AT3G58160">
    <property type="gene designation" value="XIJ"/>
</dbReference>
<dbReference type="eggNOG" id="KOG0160">
    <property type="taxonomic scope" value="Eukaryota"/>
</dbReference>
<dbReference type="HOGENOM" id="CLU_000192_3_1_1"/>
<dbReference type="InParanoid" id="Q9M2K0"/>
<dbReference type="OrthoDB" id="6108017at2759"/>
<dbReference type="PhylomeDB" id="Q9M2K0"/>
<dbReference type="PRO" id="PR:Q9M2K0"/>
<dbReference type="Proteomes" id="UP000006548">
    <property type="component" value="Chromosome 3"/>
</dbReference>
<dbReference type="ExpressionAtlas" id="Q9M2K0">
    <property type="expression patterns" value="baseline and differential"/>
</dbReference>
<dbReference type="GO" id="GO:0016459">
    <property type="term" value="C:myosin complex"/>
    <property type="evidence" value="ECO:0000250"/>
    <property type="project" value="TAIR"/>
</dbReference>
<dbReference type="GO" id="GO:0000325">
    <property type="term" value="C:plant-type vacuole"/>
    <property type="evidence" value="ECO:0007005"/>
    <property type="project" value="TAIR"/>
</dbReference>
<dbReference type="GO" id="GO:0003779">
    <property type="term" value="F:actin binding"/>
    <property type="evidence" value="ECO:0007669"/>
    <property type="project" value="UniProtKB-KW"/>
</dbReference>
<dbReference type="GO" id="GO:0005524">
    <property type="term" value="F:ATP binding"/>
    <property type="evidence" value="ECO:0007669"/>
    <property type="project" value="UniProtKB-KW"/>
</dbReference>
<dbReference type="GO" id="GO:0005516">
    <property type="term" value="F:calmodulin binding"/>
    <property type="evidence" value="ECO:0007669"/>
    <property type="project" value="UniProtKB-KW"/>
</dbReference>
<dbReference type="GO" id="GO:0003774">
    <property type="term" value="F:cytoskeletal motor activity"/>
    <property type="evidence" value="ECO:0000250"/>
    <property type="project" value="TAIR"/>
</dbReference>
<dbReference type="GO" id="GO:0016787">
    <property type="term" value="F:hydrolase activity"/>
    <property type="evidence" value="ECO:0007669"/>
    <property type="project" value="UniProtKB-KW"/>
</dbReference>
<dbReference type="GO" id="GO:0030048">
    <property type="term" value="P:actin filament-based movement"/>
    <property type="evidence" value="ECO:0000304"/>
    <property type="project" value="TAIR"/>
</dbReference>
<dbReference type="CDD" id="cd23767">
    <property type="entry name" value="IQCD"/>
    <property type="match status" value="1"/>
</dbReference>
<dbReference type="CDD" id="cd01384">
    <property type="entry name" value="MYSc_Myo11"/>
    <property type="match status" value="1"/>
</dbReference>
<dbReference type="FunFam" id="1.20.58.530:FF:000002">
    <property type="entry name" value="Class V myosin"/>
    <property type="match status" value="1"/>
</dbReference>
<dbReference type="FunFam" id="1.20.120.720:FF:000011">
    <property type="entry name" value="Myosin 2"/>
    <property type="match status" value="1"/>
</dbReference>
<dbReference type="FunFam" id="1.10.10.820:FF:000001">
    <property type="entry name" value="Myosin heavy chain"/>
    <property type="match status" value="1"/>
</dbReference>
<dbReference type="FunFam" id="1.20.5.190:FF:000001">
    <property type="entry name" value="unconventional myosin-Va"/>
    <property type="match status" value="1"/>
</dbReference>
<dbReference type="Gene3D" id="1.10.10.820">
    <property type="match status" value="1"/>
</dbReference>
<dbReference type="Gene3D" id="1.20.5.190">
    <property type="match status" value="3"/>
</dbReference>
<dbReference type="Gene3D" id="1.20.58.530">
    <property type="match status" value="1"/>
</dbReference>
<dbReference type="Gene3D" id="3.30.70.1590">
    <property type="match status" value="1"/>
</dbReference>
<dbReference type="Gene3D" id="3.40.850.10">
    <property type="entry name" value="Kinesin motor domain"/>
    <property type="match status" value="1"/>
</dbReference>
<dbReference type="Gene3D" id="1.20.120.720">
    <property type="entry name" value="Myosin VI head, motor domain, U50 subdomain"/>
    <property type="match status" value="1"/>
</dbReference>
<dbReference type="InterPro" id="IPR000048">
    <property type="entry name" value="IQ_motif_EF-hand-BS"/>
</dbReference>
<dbReference type="InterPro" id="IPR036961">
    <property type="entry name" value="Kinesin_motor_dom_sf"/>
</dbReference>
<dbReference type="InterPro" id="IPR001609">
    <property type="entry name" value="Myosin_head_motor_dom-like"/>
</dbReference>
<dbReference type="InterPro" id="IPR004009">
    <property type="entry name" value="Myosin_N"/>
</dbReference>
<dbReference type="InterPro" id="IPR036018">
    <property type="entry name" value="MYSc_Myo11"/>
</dbReference>
<dbReference type="InterPro" id="IPR027417">
    <property type="entry name" value="P-loop_NTPase"/>
</dbReference>
<dbReference type="PANTHER" id="PTHR13140">
    <property type="entry name" value="MYOSIN"/>
    <property type="match status" value="1"/>
</dbReference>
<dbReference type="PANTHER" id="PTHR13140:SF866">
    <property type="entry name" value="MYOSIN-16"/>
    <property type="match status" value="1"/>
</dbReference>
<dbReference type="Pfam" id="PF00612">
    <property type="entry name" value="IQ"/>
    <property type="match status" value="3"/>
</dbReference>
<dbReference type="Pfam" id="PF00063">
    <property type="entry name" value="Myosin_head"/>
    <property type="match status" value="1"/>
</dbReference>
<dbReference type="Pfam" id="PF02736">
    <property type="entry name" value="Myosin_N"/>
    <property type="match status" value="1"/>
</dbReference>
<dbReference type="PRINTS" id="PR00193">
    <property type="entry name" value="MYOSINHEAVY"/>
</dbReference>
<dbReference type="SMART" id="SM00015">
    <property type="entry name" value="IQ"/>
    <property type="match status" value="6"/>
</dbReference>
<dbReference type="SMART" id="SM00242">
    <property type="entry name" value="MYSc"/>
    <property type="match status" value="1"/>
</dbReference>
<dbReference type="SUPFAM" id="SSF52540">
    <property type="entry name" value="P-loop containing nucleoside triphosphate hydrolases"/>
    <property type="match status" value="2"/>
</dbReference>
<dbReference type="PROSITE" id="PS50096">
    <property type="entry name" value="IQ"/>
    <property type="match status" value="4"/>
</dbReference>
<dbReference type="PROSITE" id="PS51456">
    <property type="entry name" value="MYOSIN_MOTOR"/>
    <property type="match status" value="1"/>
</dbReference>
<dbReference type="PROSITE" id="PS51844">
    <property type="entry name" value="SH3_LIKE"/>
    <property type="match status" value="1"/>
</dbReference>
<accession>Q9M2K0</accession>
<accession>Q39159</accession>
<reference key="1">
    <citation type="journal article" date="2000" name="Nature">
        <title>Sequence and analysis of chromosome 3 of the plant Arabidopsis thaliana.</title>
        <authorList>
            <person name="Salanoubat M."/>
            <person name="Lemcke K."/>
            <person name="Rieger M."/>
            <person name="Ansorge W."/>
            <person name="Unseld M."/>
            <person name="Fartmann B."/>
            <person name="Valle G."/>
            <person name="Bloecker H."/>
            <person name="Perez-Alonso M."/>
            <person name="Obermaier B."/>
            <person name="Delseny M."/>
            <person name="Boutry M."/>
            <person name="Grivell L.A."/>
            <person name="Mache R."/>
            <person name="Puigdomenech P."/>
            <person name="De Simone V."/>
            <person name="Choisne N."/>
            <person name="Artiguenave F."/>
            <person name="Robert C."/>
            <person name="Brottier P."/>
            <person name="Wincker P."/>
            <person name="Cattolico L."/>
            <person name="Weissenbach J."/>
            <person name="Saurin W."/>
            <person name="Quetier F."/>
            <person name="Schaefer M."/>
            <person name="Mueller-Auer S."/>
            <person name="Gabel C."/>
            <person name="Fuchs M."/>
            <person name="Benes V."/>
            <person name="Wurmbach E."/>
            <person name="Drzonek H."/>
            <person name="Erfle H."/>
            <person name="Jordan N."/>
            <person name="Bangert S."/>
            <person name="Wiedelmann R."/>
            <person name="Kranz H."/>
            <person name="Voss H."/>
            <person name="Holland R."/>
            <person name="Brandt P."/>
            <person name="Nyakatura G."/>
            <person name="Vezzi A."/>
            <person name="D'Angelo M."/>
            <person name="Pallavicini A."/>
            <person name="Toppo S."/>
            <person name="Simionati B."/>
            <person name="Conrad A."/>
            <person name="Hornischer K."/>
            <person name="Kauer G."/>
            <person name="Loehnert T.-H."/>
            <person name="Nordsiek G."/>
            <person name="Reichelt J."/>
            <person name="Scharfe M."/>
            <person name="Schoen O."/>
            <person name="Bargues M."/>
            <person name="Terol J."/>
            <person name="Climent J."/>
            <person name="Navarro P."/>
            <person name="Collado C."/>
            <person name="Perez-Perez A."/>
            <person name="Ottenwaelder B."/>
            <person name="Duchemin D."/>
            <person name="Cooke R."/>
            <person name="Laudie M."/>
            <person name="Berger-Llauro C."/>
            <person name="Purnelle B."/>
            <person name="Masuy D."/>
            <person name="de Haan M."/>
            <person name="Maarse A.C."/>
            <person name="Alcaraz J.-P."/>
            <person name="Cottet A."/>
            <person name="Casacuberta E."/>
            <person name="Monfort A."/>
            <person name="Argiriou A."/>
            <person name="Flores M."/>
            <person name="Liguori R."/>
            <person name="Vitale D."/>
            <person name="Mannhaupt G."/>
            <person name="Haase D."/>
            <person name="Schoof H."/>
            <person name="Rudd S."/>
            <person name="Zaccaria P."/>
            <person name="Mewes H.-W."/>
            <person name="Mayer K.F.X."/>
            <person name="Kaul S."/>
            <person name="Town C.D."/>
            <person name="Koo H.L."/>
            <person name="Tallon L.J."/>
            <person name="Jenkins J."/>
            <person name="Rooney T."/>
            <person name="Rizzo M."/>
            <person name="Walts A."/>
            <person name="Utterback T."/>
            <person name="Fujii C.Y."/>
            <person name="Shea T.P."/>
            <person name="Creasy T.H."/>
            <person name="Haas B."/>
            <person name="Maiti R."/>
            <person name="Wu D."/>
            <person name="Peterson J."/>
            <person name="Van Aken S."/>
            <person name="Pai G."/>
            <person name="Militscher J."/>
            <person name="Sellers P."/>
            <person name="Gill J.E."/>
            <person name="Feldblyum T.V."/>
            <person name="Preuss D."/>
            <person name="Lin X."/>
            <person name="Nierman W.C."/>
            <person name="Salzberg S.L."/>
            <person name="White O."/>
            <person name="Venter J.C."/>
            <person name="Fraser C.M."/>
            <person name="Kaneko T."/>
            <person name="Nakamura Y."/>
            <person name="Sato S."/>
            <person name="Kato T."/>
            <person name="Asamizu E."/>
            <person name="Sasamoto S."/>
            <person name="Kimura T."/>
            <person name="Idesawa K."/>
            <person name="Kawashima K."/>
            <person name="Kishida Y."/>
            <person name="Kiyokawa C."/>
            <person name="Kohara M."/>
            <person name="Matsumoto M."/>
            <person name="Matsuno A."/>
            <person name="Muraki A."/>
            <person name="Nakayama S."/>
            <person name="Nakazaki N."/>
            <person name="Shinpo S."/>
            <person name="Takeuchi C."/>
            <person name="Wada T."/>
            <person name="Watanabe A."/>
            <person name="Yamada M."/>
            <person name="Yasuda M."/>
            <person name="Tabata S."/>
        </authorList>
    </citation>
    <scope>NUCLEOTIDE SEQUENCE [LARGE SCALE GENOMIC DNA]</scope>
    <source>
        <strain>cv. Columbia</strain>
    </source>
</reference>
<reference key="2">
    <citation type="journal article" date="2017" name="Plant J.">
        <title>Araport11: a complete reannotation of the Arabidopsis thaliana reference genome.</title>
        <authorList>
            <person name="Cheng C.Y."/>
            <person name="Krishnakumar V."/>
            <person name="Chan A.P."/>
            <person name="Thibaud-Nissen F."/>
            <person name="Schobel S."/>
            <person name="Town C.D."/>
        </authorList>
    </citation>
    <scope>GENOME REANNOTATION</scope>
    <source>
        <strain>cv. Columbia</strain>
    </source>
</reference>
<reference key="3">
    <citation type="journal article" date="1994" name="Plant Mol. Biol.">
        <title>Molecular analysis of the myosin gene family in Arabidopsis thaliana.</title>
        <authorList>
            <person name="Kinkema M.D."/>
            <person name="Wang H."/>
            <person name="Schiefelbein J."/>
        </authorList>
    </citation>
    <scope>NUCLEOTIDE SEQUENCE [MRNA] OF 280-1242</scope>
    <scope>REPEATS</scope>
    <scope>TISSUE SPECIFICITY</scope>
    <source>
        <strain>cv. Columbia</strain>
        <tissue>Seedling</tissue>
    </source>
</reference>
<reference key="4">
    <citation type="journal article" date="2000" name="J. Cell Sci.">
        <title>A myosin family tree.</title>
        <authorList>
            <person name="Hodge T."/>
            <person name="Cope M.J."/>
        </authorList>
    </citation>
    <scope>GENE FAMILY</scope>
</reference>
<reference key="5">
    <citation type="journal article" date="2001" name="Genome Biol.">
        <title>Analysis of the myosins encoded in the recently completed Arabidopsis thaliana genome sequence.</title>
        <authorList>
            <person name="Reddy A.S."/>
            <person name="Day I.S."/>
        </authorList>
    </citation>
    <scope>GENE FAMILY</scope>
</reference>
<reference key="6">
    <citation type="journal article" date="2007" name="BMC Plant Biol.">
        <title>Association of six YFP-myosin XI-tail fusions with mobile plant cell organelles.</title>
        <authorList>
            <person name="Reisen D."/>
            <person name="Hanson M.R."/>
        </authorList>
    </citation>
    <scope>SUBCELLULAR LOCATION</scope>
</reference>
<reference key="7">
    <citation type="journal article" date="2011" name="Plant Physiol.">
        <title>Expression, splicing, and evolution of the myosin gene family in plants.</title>
        <authorList>
            <person name="Peremyslov V.V."/>
            <person name="Mockler T.C."/>
            <person name="Filichkin S.A."/>
            <person name="Fox S.E."/>
            <person name="Jaiswal P."/>
            <person name="Makarova K.S."/>
            <person name="Koonin E.V."/>
            <person name="Dolja V.V."/>
        </authorList>
    </citation>
    <scope>GENE FAMILY</scope>
    <scope>NOMENCLATURE</scope>
</reference>
<protein>
    <recommendedName>
        <fullName>Myosin-16</fullName>
    </recommendedName>
    <alternativeName>
        <fullName>AtMYA3</fullName>
    </alternativeName>
    <alternativeName>
        <fullName>AtMYOS3</fullName>
    </alternativeName>
    <alternativeName>
        <fullName>Myosin XI J</fullName>
        <shortName>AtXIJ</shortName>
    </alternativeName>
</protein>
<gene>
    <name type="primary">XI-J</name>
    <name type="synonym">MYA3</name>
    <name type="synonym">MYOS3</name>
    <name type="synonym">XIJ</name>
    <name type="ordered locus">At3g58160</name>
    <name type="ORF">F9D24.70</name>
</gene>
<feature type="chain" id="PRO_0000422871" description="Myosin-16">
    <location>
        <begin position="1"/>
        <end position="1242"/>
    </location>
</feature>
<feature type="domain" description="Myosin N-terminal SH3-like" evidence="5">
    <location>
        <begin position="6"/>
        <end position="55"/>
    </location>
</feature>
<feature type="domain" description="Myosin motor" evidence="4">
    <location>
        <begin position="60"/>
        <end position="729"/>
    </location>
</feature>
<feature type="domain" description="IQ 1" evidence="3">
    <location>
        <begin position="732"/>
        <end position="761"/>
    </location>
</feature>
<feature type="domain" description="IQ 2" evidence="3">
    <location>
        <begin position="755"/>
        <end position="784"/>
    </location>
</feature>
<feature type="domain" description="IQ 3" evidence="3">
    <location>
        <begin position="780"/>
        <end position="809"/>
    </location>
</feature>
<feature type="domain" description="IQ 4" evidence="3">
    <location>
        <begin position="803"/>
        <end position="832"/>
    </location>
</feature>
<feature type="domain" description="IQ 5" evidence="3">
    <location>
        <begin position="828"/>
        <end position="857"/>
    </location>
</feature>
<feature type="domain" description="IQ 6" evidence="3">
    <location>
        <begin position="851"/>
        <end position="880"/>
    </location>
</feature>
<feature type="repeat" description="1" evidence="8">
    <location>
        <begin position="876"/>
        <end position="908"/>
    </location>
</feature>
<feature type="repeat" description="2" evidence="8">
    <location>
        <begin position="909"/>
        <end position="940"/>
    </location>
</feature>
<feature type="repeat" description="3" evidence="8">
    <location>
        <begin position="941"/>
        <end position="965"/>
    </location>
</feature>
<feature type="repeat" description="4" evidence="8">
    <location>
        <begin position="966"/>
        <end position="997"/>
    </location>
</feature>
<feature type="repeat" description="5" evidence="8">
    <location>
        <begin position="998"/>
        <end position="1029"/>
    </location>
</feature>
<feature type="repeat" description="6" evidence="8">
    <location>
        <begin position="1030"/>
        <end position="1061"/>
    </location>
</feature>
<feature type="region of interest" description="Actin-binding" evidence="2">
    <location>
        <begin position="493"/>
        <end position="527"/>
    </location>
</feature>
<feature type="region of interest" description="Actin-binding" evidence="2">
    <location>
        <begin position="529"/>
        <end position="552"/>
    </location>
</feature>
<feature type="region of interest" description="Actin-binding" evidence="2">
    <location>
        <begin position="587"/>
        <end position="610"/>
    </location>
</feature>
<feature type="region of interest" description="Actin-binding" evidence="1">
    <location>
        <begin position="610"/>
        <end position="632"/>
    </location>
</feature>
<feature type="region of interest" description="Disordered" evidence="6">
    <location>
        <begin position="869"/>
        <end position="893"/>
    </location>
</feature>
<feature type="region of interest" description="6 X 33 AA repeats of Q-S-D-D-x-E-E-x(2)-H-x-R-K-x-K-x(2)-I-x(2)-E-D-G-x(3)-S-x-V-x-H-S-x">
    <location>
        <begin position="876"/>
        <end position="1061"/>
    </location>
</feature>
<feature type="region of interest" description="Disordered" evidence="6">
    <location>
        <begin position="908"/>
        <end position="1042"/>
    </location>
</feature>
<feature type="region of interest" description="Disordered" evidence="6">
    <location>
        <begin position="1175"/>
        <end position="1242"/>
    </location>
</feature>
<feature type="coiled-coil region" evidence="2">
    <location>
        <begin position="1079"/>
        <end position="1142"/>
    </location>
</feature>
<feature type="compositionally biased region" description="Basic and acidic residues" evidence="6">
    <location>
        <begin position="876"/>
        <end position="893"/>
    </location>
</feature>
<feature type="compositionally biased region" description="Basic and acidic residues" evidence="6">
    <location>
        <begin position="948"/>
        <end position="966"/>
    </location>
</feature>
<feature type="compositionally biased region" description="Low complexity" evidence="6">
    <location>
        <begin position="1179"/>
        <end position="1191"/>
    </location>
</feature>
<feature type="compositionally biased region" description="Polar residues" evidence="6">
    <location>
        <begin position="1199"/>
        <end position="1224"/>
    </location>
</feature>
<feature type="compositionally biased region" description="Basic and acidic residues" evidence="6">
    <location>
        <begin position="1225"/>
        <end position="1242"/>
    </location>
</feature>
<feature type="binding site" evidence="2">
    <location>
        <begin position="154"/>
        <end position="161"/>
    </location>
    <ligand>
        <name>ATP</name>
        <dbReference type="ChEBI" id="CHEBI:30616"/>
    </ligand>
</feature>
<feature type="binding site" evidence="2">
    <location>
        <begin position="207"/>
        <end position="215"/>
    </location>
    <ligand>
        <name>ATP</name>
        <dbReference type="ChEBI" id="CHEBI:30616"/>
    </ligand>
</feature>
<feature type="sequence conflict" description="In Ref. 3; CAA84067." evidence="9" ref="3">
    <original>S</original>
    <variation>SD</variation>
    <location>
        <position position="1031"/>
    </location>
</feature>
<feature type="sequence conflict" description="In Ref. 3; CAA84067." evidence="9" ref="3">
    <original>T</original>
    <variation>A</variation>
    <location>
        <position position="1058"/>
    </location>
</feature>